<keyword id="KW-0963">Cytoplasm</keyword>
<keyword id="KW-0648">Protein biosynthesis</keyword>
<accession>B1IBA8</accession>
<sequence length="185" mass="20657">MANVIIEKAKERMTQSHQSLAREFGGIRAGRANASLLDRVHVEYYGVETPLNQIASITIPEARVLLVTPFDKSSLKDIERALNASDLGITPANDGSVIRLVIPALTEETRRDLAKEVKKVGENAKVAVRNIRRDAMDEAKKQEKAKEITEDELKTLEKDIQKVTDDAVKHIDDMTANKEKELLEV</sequence>
<gene>
    <name evidence="1" type="primary">frr</name>
    <name type="ordered locus">SPH_1049</name>
</gene>
<proteinExistence type="inferred from homology"/>
<evidence type="ECO:0000255" key="1">
    <source>
        <dbReference type="HAMAP-Rule" id="MF_00040"/>
    </source>
</evidence>
<name>RRF_STRPI</name>
<protein>
    <recommendedName>
        <fullName evidence="1">Ribosome-recycling factor</fullName>
        <shortName evidence="1">RRF</shortName>
    </recommendedName>
    <alternativeName>
        <fullName evidence="1">Ribosome-releasing factor</fullName>
    </alternativeName>
</protein>
<comment type="function">
    <text evidence="1">Responsible for the release of ribosomes from messenger RNA at the termination of protein biosynthesis. May increase the efficiency of translation by recycling ribosomes from one round of translation to another.</text>
</comment>
<comment type="subcellular location">
    <subcellularLocation>
        <location evidence="1">Cytoplasm</location>
    </subcellularLocation>
</comment>
<comment type="similarity">
    <text evidence="1">Belongs to the RRF family.</text>
</comment>
<feature type="chain" id="PRO_1000090792" description="Ribosome-recycling factor">
    <location>
        <begin position="1"/>
        <end position="185"/>
    </location>
</feature>
<dbReference type="EMBL" id="CP000936">
    <property type="protein sequence ID" value="ACA35595.1"/>
    <property type="molecule type" value="Genomic_DNA"/>
</dbReference>
<dbReference type="RefSeq" id="WP_000024409.1">
    <property type="nucleotide sequence ID" value="NC_010380.1"/>
</dbReference>
<dbReference type="SMR" id="B1IBA8"/>
<dbReference type="KEGG" id="spv:SPH_1049"/>
<dbReference type="HOGENOM" id="CLU_073981_2_0_9"/>
<dbReference type="Proteomes" id="UP000002163">
    <property type="component" value="Chromosome"/>
</dbReference>
<dbReference type="GO" id="GO:0005737">
    <property type="term" value="C:cytoplasm"/>
    <property type="evidence" value="ECO:0007669"/>
    <property type="project" value="UniProtKB-SubCell"/>
</dbReference>
<dbReference type="GO" id="GO:0043023">
    <property type="term" value="F:ribosomal large subunit binding"/>
    <property type="evidence" value="ECO:0007669"/>
    <property type="project" value="TreeGrafter"/>
</dbReference>
<dbReference type="GO" id="GO:0006415">
    <property type="term" value="P:translational termination"/>
    <property type="evidence" value="ECO:0007669"/>
    <property type="project" value="UniProtKB-UniRule"/>
</dbReference>
<dbReference type="CDD" id="cd00520">
    <property type="entry name" value="RRF"/>
    <property type="match status" value="1"/>
</dbReference>
<dbReference type="FunFam" id="1.10.132.20:FF:000001">
    <property type="entry name" value="Ribosome-recycling factor"/>
    <property type="match status" value="1"/>
</dbReference>
<dbReference type="FunFam" id="3.30.1360.40:FF:000001">
    <property type="entry name" value="Ribosome-recycling factor"/>
    <property type="match status" value="1"/>
</dbReference>
<dbReference type="Gene3D" id="3.30.1360.40">
    <property type="match status" value="1"/>
</dbReference>
<dbReference type="Gene3D" id="1.10.132.20">
    <property type="entry name" value="Ribosome-recycling factor"/>
    <property type="match status" value="1"/>
</dbReference>
<dbReference type="HAMAP" id="MF_00040">
    <property type="entry name" value="RRF"/>
    <property type="match status" value="1"/>
</dbReference>
<dbReference type="InterPro" id="IPR002661">
    <property type="entry name" value="Ribosome_recyc_fac"/>
</dbReference>
<dbReference type="InterPro" id="IPR023584">
    <property type="entry name" value="Ribosome_recyc_fac_dom"/>
</dbReference>
<dbReference type="InterPro" id="IPR036191">
    <property type="entry name" value="RRF_sf"/>
</dbReference>
<dbReference type="NCBIfam" id="TIGR00496">
    <property type="entry name" value="frr"/>
    <property type="match status" value="1"/>
</dbReference>
<dbReference type="PANTHER" id="PTHR20982:SF3">
    <property type="entry name" value="MITOCHONDRIAL RIBOSOME RECYCLING FACTOR PSEUDO 1"/>
    <property type="match status" value="1"/>
</dbReference>
<dbReference type="PANTHER" id="PTHR20982">
    <property type="entry name" value="RIBOSOME RECYCLING FACTOR"/>
    <property type="match status" value="1"/>
</dbReference>
<dbReference type="Pfam" id="PF01765">
    <property type="entry name" value="RRF"/>
    <property type="match status" value="1"/>
</dbReference>
<dbReference type="SUPFAM" id="SSF55194">
    <property type="entry name" value="Ribosome recycling factor, RRF"/>
    <property type="match status" value="1"/>
</dbReference>
<reference key="1">
    <citation type="journal article" date="2010" name="Genome Biol.">
        <title>Structure and dynamics of the pan-genome of Streptococcus pneumoniae and closely related species.</title>
        <authorList>
            <person name="Donati C."/>
            <person name="Hiller N.L."/>
            <person name="Tettelin H."/>
            <person name="Muzzi A."/>
            <person name="Croucher N.J."/>
            <person name="Angiuoli S.V."/>
            <person name="Oggioni M."/>
            <person name="Dunning Hotopp J.C."/>
            <person name="Hu F.Z."/>
            <person name="Riley D.R."/>
            <person name="Covacci A."/>
            <person name="Mitchell T.J."/>
            <person name="Bentley S.D."/>
            <person name="Kilian M."/>
            <person name="Ehrlich G.D."/>
            <person name="Rappuoli R."/>
            <person name="Moxon E.R."/>
            <person name="Masignani V."/>
        </authorList>
    </citation>
    <scope>NUCLEOTIDE SEQUENCE [LARGE SCALE GENOMIC DNA]</scope>
    <source>
        <strain>Hungary19A-6</strain>
    </source>
</reference>
<organism>
    <name type="scientific">Streptococcus pneumoniae (strain Hungary19A-6)</name>
    <dbReference type="NCBI Taxonomy" id="487214"/>
    <lineage>
        <taxon>Bacteria</taxon>
        <taxon>Bacillati</taxon>
        <taxon>Bacillota</taxon>
        <taxon>Bacilli</taxon>
        <taxon>Lactobacillales</taxon>
        <taxon>Streptococcaceae</taxon>
        <taxon>Streptococcus</taxon>
    </lineage>
</organism>